<reference key="1">
    <citation type="journal article" date="2004" name="Proc. Natl. Acad. Sci. U.S.A.">
        <title>Structural flexibility in the Burkholderia mallei genome.</title>
        <authorList>
            <person name="Nierman W.C."/>
            <person name="DeShazer D."/>
            <person name="Kim H.S."/>
            <person name="Tettelin H."/>
            <person name="Nelson K.E."/>
            <person name="Feldblyum T.V."/>
            <person name="Ulrich R.L."/>
            <person name="Ronning C.M."/>
            <person name="Brinkac L.M."/>
            <person name="Daugherty S.C."/>
            <person name="Davidsen T.D."/>
            <person name="DeBoy R.T."/>
            <person name="Dimitrov G."/>
            <person name="Dodson R.J."/>
            <person name="Durkin A.S."/>
            <person name="Gwinn M.L."/>
            <person name="Haft D.H."/>
            <person name="Khouri H.M."/>
            <person name="Kolonay J.F."/>
            <person name="Madupu R."/>
            <person name="Mohammoud Y."/>
            <person name="Nelson W.C."/>
            <person name="Radune D."/>
            <person name="Romero C.M."/>
            <person name="Sarria S."/>
            <person name="Selengut J."/>
            <person name="Shamblin C."/>
            <person name="Sullivan S.A."/>
            <person name="White O."/>
            <person name="Yu Y."/>
            <person name="Zafar N."/>
            <person name="Zhou L."/>
            <person name="Fraser C.M."/>
        </authorList>
    </citation>
    <scope>NUCLEOTIDE SEQUENCE [LARGE SCALE GENOMIC DNA]</scope>
    <source>
        <strain>ATCC 23344</strain>
    </source>
</reference>
<proteinExistence type="inferred from homology"/>
<protein>
    <recommendedName>
        <fullName evidence="1">Large ribosomal subunit protein uL10</fullName>
    </recommendedName>
    <alternativeName>
        <fullName evidence="2">50S ribosomal protein L10</fullName>
    </alternativeName>
</protein>
<comment type="function">
    <text evidence="1">Forms part of the ribosomal stalk, playing a central role in the interaction of the ribosome with GTP-bound translation factors.</text>
</comment>
<comment type="subunit">
    <text evidence="1">Part of the ribosomal stalk of the 50S ribosomal subunit. The N-terminus interacts with L11 and the large rRNA to form the base of the stalk. The C-terminus forms an elongated spine to which L12 dimers bind in a sequential fashion forming a multimeric L10(L12)X complex.</text>
</comment>
<comment type="similarity">
    <text evidence="1">Belongs to the universal ribosomal protein uL10 family.</text>
</comment>
<keyword id="KW-1185">Reference proteome</keyword>
<keyword id="KW-0687">Ribonucleoprotein</keyword>
<keyword id="KW-0689">Ribosomal protein</keyword>
<keyword id="KW-0694">RNA-binding</keyword>
<keyword id="KW-0699">rRNA-binding</keyword>
<evidence type="ECO:0000255" key="1">
    <source>
        <dbReference type="HAMAP-Rule" id="MF_00362"/>
    </source>
</evidence>
<evidence type="ECO:0000305" key="2"/>
<gene>
    <name evidence="1" type="primary">rplJ</name>
    <name type="ordered locus">BMA2643</name>
</gene>
<sequence>MPLNREDKQAVVAEVAAQVAKAQTVVLAEYRGIAVGDLTTLRAKAREQKVYLRVLKNTLARRAVEGTPFAPLAEQMTGPLIYGISEDAIAAAKVVHDFSKSNDKLVIKAGSYDGKVMDKAGVQALASIPSREELLSKLLFVMQAPVSGFARALAALAEKKQAEAA</sequence>
<feature type="chain" id="PRO_0000154605" description="Large ribosomal subunit protein uL10">
    <location>
        <begin position="1"/>
        <end position="165"/>
    </location>
</feature>
<organism>
    <name type="scientific">Burkholderia mallei (strain ATCC 23344)</name>
    <dbReference type="NCBI Taxonomy" id="243160"/>
    <lineage>
        <taxon>Bacteria</taxon>
        <taxon>Pseudomonadati</taxon>
        <taxon>Pseudomonadota</taxon>
        <taxon>Betaproteobacteria</taxon>
        <taxon>Burkholderiales</taxon>
        <taxon>Burkholderiaceae</taxon>
        <taxon>Burkholderia</taxon>
        <taxon>pseudomallei group</taxon>
    </lineage>
</organism>
<dbReference type="EMBL" id="CP000010">
    <property type="protein sequence ID" value="AAU47880.1"/>
    <property type="molecule type" value="Genomic_DNA"/>
</dbReference>
<dbReference type="RefSeq" id="WP_004199864.1">
    <property type="nucleotide sequence ID" value="NC_006348.1"/>
</dbReference>
<dbReference type="RefSeq" id="YP_104176.1">
    <property type="nucleotide sequence ID" value="NC_006348.1"/>
</dbReference>
<dbReference type="SMR" id="Q62GJ5"/>
<dbReference type="GeneID" id="93061843"/>
<dbReference type="KEGG" id="bma:BMA2643"/>
<dbReference type="PATRIC" id="fig|243160.12.peg.2716"/>
<dbReference type="eggNOG" id="COG0244">
    <property type="taxonomic scope" value="Bacteria"/>
</dbReference>
<dbReference type="HOGENOM" id="CLU_092227_0_1_4"/>
<dbReference type="Proteomes" id="UP000006693">
    <property type="component" value="Chromosome 1"/>
</dbReference>
<dbReference type="GO" id="GO:1990904">
    <property type="term" value="C:ribonucleoprotein complex"/>
    <property type="evidence" value="ECO:0007669"/>
    <property type="project" value="UniProtKB-KW"/>
</dbReference>
<dbReference type="GO" id="GO:0005840">
    <property type="term" value="C:ribosome"/>
    <property type="evidence" value="ECO:0007669"/>
    <property type="project" value="UniProtKB-KW"/>
</dbReference>
<dbReference type="GO" id="GO:0070180">
    <property type="term" value="F:large ribosomal subunit rRNA binding"/>
    <property type="evidence" value="ECO:0007669"/>
    <property type="project" value="UniProtKB-UniRule"/>
</dbReference>
<dbReference type="GO" id="GO:0006412">
    <property type="term" value="P:translation"/>
    <property type="evidence" value="ECO:0007669"/>
    <property type="project" value="UniProtKB-UniRule"/>
</dbReference>
<dbReference type="CDD" id="cd05797">
    <property type="entry name" value="Ribosomal_L10"/>
    <property type="match status" value="1"/>
</dbReference>
<dbReference type="Gene3D" id="3.30.70.1730">
    <property type="match status" value="1"/>
</dbReference>
<dbReference type="Gene3D" id="6.10.250.290">
    <property type="match status" value="1"/>
</dbReference>
<dbReference type="HAMAP" id="MF_00362">
    <property type="entry name" value="Ribosomal_uL10"/>
    <property type="match status" value="1"/>
</dbReference>
<dbReference type="InterPro" id="IPR001790">
    <property type="entry name" value="Ribosomal_uL10"/>
</dbReference>
<dbReference type="InterPro" id="IPR043141">
    <property type="entry name" value="Ribosomal_uL10-like_sf"/>
</dbReference>
<dbReference type="InterPro" id="IPR022973">
    <property type="entry name" value="Ribosomal_uL10_bac"/>
</dbReference>
<dbReference type="InterPro" id="IPR047865">
    <property type="entry name" value="Ribosomal_uL10_bac_type"/>
</dbReference>
<dbReference type="NCBIfam" id="NF000955">
    <property type="entry name" value="PRK00099.1-1"/>
    <property type="match status" value="1"/>
</dbReference>
<dbReference type="PANTHER" id="PTHR11560">
    <property type="entry name" value="39S RIBOSOMAL PROTEIN L10, MITOCHONDRIAL"/>
    <property type="match status" value="1"/>
</dbReference>
<dbReference type="Pfam" id="PF00466">
    <property type="entry name" value="Ribosomal_L10"/>
    <property type="match status" value="1"/>
</dbReference>
<dbReference type="SUPFAM" id="SSF160369">
    <property type="entry name" value="Ribosomal protein L10-like"/>
    <property type="match status" value="1"/>
</dbReference>
<name>RL10_BURMA</name>
<accession>Q62GJ5</accession>